<gene>
    <name evidence="1" type="primary">rplT</name>
    <name type="ordered locus">BP2575</name>
</gene>
<name>RL20_BORPE</name>
<comment type="function">
    <text evidence="1">Binds directly to 23S ribosomal RNA and is necessary for the in vitro assembly process of the 50S ribosomal subunit. It is not involved in the protein synthesizing functions of that subunit.</text>
</comment>
<comment type="similarity">
    <text evidence="1">Belongs to the bacterial ribosomal protein bL20 family.</text>
</comment>
<proteinExistence type="inferred from homology"/>
<accession>Q7VVR3</accession>
<sequence>MPRVKRGVTARARHKKVIAAAKGYRGRRGNVFRIAKQAVMRAGQYAYRDRRNKKRTFRALWITRINAAVREQGMSYSVFIAGLKKAAIELDRKVLADLAVRDKAGFAAIVQQAKAALAA</sequence>
<protein>
    <recommendedName>
        <fullName evidence="1">Large ribosomal subunit protein bL20</fullName>
    </recommendedName>
    <alternativeName>
        <fullName evidence="2">50S ribosomal protein L20</fullName>
    </alternativeName>
</protein>
<feature type="chain" id="PRO_0000177128" description="Large ribosomal subunit protein bL20">
    <location>
        <begin position="1"/>
        <end position="119"/>
    </location>
</feature>
<organism>
    <name type="scientific">Bordetella pertussis (strain Tohama I / ATCC BAA-589 / NCTC 13251)</name>
    <dbReference type="NCBI Taxonomy" id="257313"/>
    <lineage>
        <taxon>Bacteria</taxon>
        <taxon>Pseudomonadati</taxon>
        <taxon>Pseudomonadota</taxon>
        <taxon>Betaproteobacteria</taxon>
        <taxon>Burkholderiales</taxon>
        <taxon>Alcaligenaceae</taxon>
        <taxon>Bordetella</taxon>
    </lineage>
</organism>
<reference key="1">
    <citation type="journal article" date="2003" name="Nat. Genet.">
        <title>Comparative analysis of the genome sequences of Bordetella pertussis, Bordetella parapertussis and Bordetella bronchiseptica.</title>
        <authorList>
            <person name="Parkhill J."/>
            <person name="Sebaihia M."/>
            <person name="Preston A."/>
            <person name="Murphy L.D."/>
            <person name="Thomson N.R."/>
            <person name="Harris D.E."/>
            <person name="Holden M.T.G."/>
            <person name="Churcher C.M."/>
            <person name="Bentley S.D."/>
            <person name="Mungall K.L."/>
            <person name="Cerdeno-Tarraga A.-M."/>
            <person name="Temple L."/>
            <person name="James K.D."/>
            <person name="Harris B."/>
            <person name="Quail M.A."/>
            <person name="Achtman M."/>
            <person name="Atkin R."/>
            <person name="Baker S."/>
            <person name="Basham D."/>
            <person name="Bason N."/>
            <person name="Cherevach I."/>
            <person name="Chillingworth T."/>
            <person name="Collins M."/>
            <person name="Cronin A."/>
            <person name="Davis P."/>
            <person name="Doggett J."/>
            <person name="Feltwell T."/>
            <person name="Goble A."/>
            <person name="Hamlin N."/>
            <person name="Hauser H."/>
            <person name="Holroyd S."/>
            <person name="Jagels K."/>
            <person name="Leather S."/>
            <person name="Moule S."/>
            <person name="Norberczak H."/>
            <person name="O'Neil S."/>
            <person name="Ormond D."/>
            <person name="Price C."/>
            <person name="Rabbinowitsch E."/>
            <person name="Rutter S."/>
            <person name="Sanders M."/>
            <person name="Saunders D."/>
            <person name="Seeger K."/>
            <person name="Sharp S."/>
            <person name="Simmonds M."/>
            <person name="Skelton J."/>
            <person name="Squares R."/>
            <person name="Squares S."/>
            <person name="Stevens K."/>
            <person name="Unwin L."/>
            <person name="Whitehead S."/>
            <person name="Barrell B.G."/>
            <person name="Maskell D.J."/>
        </authorList>
    </citation>
    <scope>NUCLEOTIDE SEQUENCE [LARGE SCALE GENOMIC DNA]</scope>
    <source>
        <strain>Tohama I / ATCC BAA-589 / NCTC 13251</strain>
    </source>
</reference>
<evidence type="ECO:0000255" key="1">
    <source>
        <dbReference type="HAMAP-Rule" id="MF_00382"/>
    </source>
</evidence>
<evidence type="ECO:0000305" key="2"/>
<keyword id="KW-1185">Reference proteome</keyword>
<keyword id="KW-0687">Ribonucleoprotein</keyword>
<keyword id="KW-0689">Ribosomal protein</keyword>
<keyword id="KW-0694">RNA-binding</keyword>
<keyword id="KW-0699">rRNA-binding</keyword>
<dbReference type="EMBL" id="BX640418">
    <property type="protein sequence ID" value="CAE42850.1"/>
    <property type="molecule type" value="Genomic_DNA"/>
</dbReference>
<dbReference type="RefSeq" id="NP_881202.1">
    <property type="nucleotide sequence ID" value="NC_002929.2"/>
</dbReference>
<dbReference type="RefSeq" id="WP_003812832.1">
    <property type="nucleotide sequence ID" value="NZ_CP039022.1"/>
</dbReference>
<dbReference type="SMR" id="Q7VVR3"/>
<dbReference type="STRING" id="257313.BP2575"/>
<dbReference type="PaxDb" id="257313-BP2575"/>
<dbReference type="GeneID" id="93204380"/>
<dbReference type="KEGG" id="bpe:BP2575"/>
<dbReference type="PATRIC" id="fig|257313.5.peg.2776"/>
<dbReference type="eggNOG" id="COG0292">
    <property type="taxonomic scope" value="Bacteria"/>
</dbReference>
<dbReference type="HOGENOM" id="CLU_123265_0_1_4"/>
<dbReference type="Proteomes" id="UP000002676">
    <property type="component" value="Chromosome"/>
</dbReference>
<dbReference type="GO" id="GO:1990904">
    <property type="term" value="C:ribonucleoprotein complex"/>
    <property type="evidence" value="ECO:0007669"/>
    <property type="project" value="UniProtKB-KW"/>
</dbReference>
<dbReference type="GO" id="GO:0005840">
    <property type="term" value="C:ribosome"/>
    <property type="evidence" value="ECO:0007669"/>
    <property type="project" value="UniProtKB-KW"/>
</dbReference>
<dbReference type="GO" id="GO:0019843">
    <property type="term" value="F:rRNA binding"/>
    <property type="evidence" value="ECO:0007669"/>
    <property type="project" value="UniProtKB-UniRule"/>
</dbReference>
<dbReference type="GO" id="GO:0003735">
    <property type="term" value="F:structural constituent of ribosome"/>
    <property type="evidence" value="ECO:0007669"/>
    <property type="project" value="InterPro"/>
</dbReference>
<dbReference type="GO" id="GO:0000027">
    <property type="term" value="P:ribosomal large subunit assembly"/>
    <property type="evidence" value="ECO:0007669"/>
    <property type="project" value="UniProtKB-UniRule"/>
</dbReference>
<dbReference type="GO" id="GO:0006412">
    <property type="term" value="P:translation"/>
    <property type="evidence" value="ECO:0007669"/>
    <property type="project" value="InterPro"/>
</dbReference>
<dbReference type="CDD" id="cd07026">
    <property type="entry name" value="Ribosomal_L20"/>
    <property type="match status" value="1"/>
</dbReference>
<dbReference type="FunFam" id="1.10.1900.20:FF:000001">
    <property type="entry name" value="50S ribosomal protein L20"/>
    <property type="match status" value="1"/>
</dbReference>
<dbReference type="Gene3D" id="6.10.160.10">
    <property type="match status" value="1"/>
</dbReference>
<dbReference type="Gene3D" id="1.10.1900.20">
    <property type="entry name" value="Ribosomal protein L20"/>
    <property type="match status" value="1"/>
</dbReference>
<dbReference type="HAMAP" id="MF_00382">
    <property type="entry name" value="Ribosomal_bL20"/>
    <property type="match status" value="1"/>
</dbReference>
<dbReference type="InterPro" id="IPR005813">
    <property type="entry name" value="Ribosomal_bL20"/>
</dbReference>
<dbReference type="InterPro" id="IPR049946">
    <property type="entry name" value="RIBOSOMAL_L20_CS"/>
</dbReference>
<dbReference type="InterPro" id="IPR035566">
    <property type="entry name" value="Ribosomal_protein_bL20_C"/>
</dbReference>
<dbReference type="NCBIfam" id="TIGR01032">
    <property type="entry name" value="rplT_bact"/>
    <property type="match status" value="1"/>
</dbReference>
<dbReference type="PANTHER" id="PTHR10986">
    <property type="entry name" value="39S RIBOSOMAL PROTEIN L20"/>
    <property type="match status" value="1"/>
</dbReference>
<dbReference type="Pfam" id="PF00453">
    <property type="entry name" value="Ribosomal_L20"/>
    <property type="match status" value="1"/>
</dbReference>
<dbReference type="PRINTS" id="PR00062">
    <property type="entry name" value="RIBOSOMALL20"/>
</dbReference>
<dbReference type="SUPFAM" id="SSF74731">
    <property type="entry name" value="Ribosomal protein L20"/>
    <property type="match status" value="1"/>
</dbReference>
<dbReference type="PROSITE" id="PS00937">
    <property type="entry name" value="RIBOSOMAL_L20"/>
    <property type="match status" value="1"/>
</dbReference>